<feature type="chain" id="PRO_0000343263" description="NAD(P)H-quinone oxidoreductase chain 4">
    <location>
        <begin position="1"/>
        <end position="546"/>
    </location>
</feature>
<feature type="transmembrane region" description="Helical" evidence="1">
    <location>
        <begin position="17"/>
        <end position="37"/>
    </location>
</feature>
<feature type="transmembrane region" description="Helical" evidence="1">
    <location>
        <begin position="48"/>
        <end position="68"/>
    </location>
</feature>
<feature type="transmembrane region" description="Helical" evidence="1">
    <location>
        <begin position="103"/>
        <end position="123"/>
    </location>
</feature>
<feature type="transmembrane region" description="Helical" evidence="1">
    <location>
        <begin position="127"/>
        <end position="147"/>
    </location>
</feature>
<feature type="transmembrane region" description="Helical" evidence="1">
    <location>
        <begin position="149"/>
        <end position="169"/>
    </location>
</feature>
<feature type="transmembrane region" description="Helical" evidence="1">
    <location>
        <begin position="181"/>
        <end position="201"/>
    </location>
</feature>
<feature type="transmembrane region" description="Helical" evidence="1">
    <location>
        <begin position="222"/>
        <end position="242"/>
    </location>
</feature>
<feature type="transmembrane region" description="Helical" evidence="1">
    <location>
        <begin position="256"/>
        <end position="276"/>
    </location>
</feature>
<feature type="transmembrane region" description="Helical" evidence="1">
    <location>
        <begin position="290"/>
        <end position="310"/>
    </location>
</feature>
<feature type="transmembrane region" description="Helical" evidence="1">
    <location>
        <begin position="327"/>
        <end position="347"/>
    </location>
</feature>
<feature type="transmembrane region" description="Helical" evidence="1">
    <location>
        <begin position="348"/>
        <end position="368"/>
    </location>
</feature>
<feature type="transmembrane region" description="Helical" evidence="1">
    <location>
        <begin position="389"/>
        <end position="409"/>
    </location>
</feature>
<feature type="transmembrane region" description="Helical" evidence="1">
    <location>
        <begin position="430"/>
        <end position="450"/>
    </location>
</feature>
<feature type="transmembrane region" description="Helical" evidence="1">
    <location>
        <begin position="477"/>
        <end position="497"/>
    </location>
</feature>
<evidence type="ECO:0000255" key="1">
    <source>
        <dbReference type="HAMAP-Rule" id="MF_00491"/>
    </source>
</evidence>
<reference key="1">
    <citation type="journal article" date="2003" name="Nature">
        <title>The genome of a motile marine Synechococcus.</title>
        <authorList>
            <person name="Palenik B."/>
            <person name="Brahamsha B."/>
            <person name="Larimer F.W."/>
            <person name="Land M.L."/>
            <person name="Hauser L."/>
            <person name="Chain P."/>
            <person name="Lamerdin J.E."/>
            <person name="Regala W."/>
            <person name="Allen E.E."/>
            <person name="McCarren J."/>
            <person name="Paulsen I.T."/>
            <person name="Dufresne A."/>
            <person name="Partensky F."/>
            <person name="Webb E.A."/>
            <person name="Waterbury J."/>
        </authorList>
    </citation>
    <scope>NUCLEOTIDE SEQUENCE [LARGE SCALE GENOMIC DNA]</scope>
    <source>
        <strain>WH8102</strain>
    </source>
</reference>
<accession>Q7U413</accession>
<sequence>MIEFAVAGANDPIAATVPWLSLSILVPIVGALLVPFIPDSGDGKQIRWYALGVTLITFLITVSAYLNGYDPSLSGLQLSERVSWLPDLGLTWAVGADGLSMPLILLTSFITSLACLAAWPVSFKPRLFYFLLLAMDGGQIAVFAVQDMLLFFLAWELELIPVYLLLAIWGGKKRQYAATKFILYTAGSSLFILLAALAMGFFGGGTPSFEYTALAAKDFGSGFQLLCYAGLLIAFGVKLPIVPLHTWLPDAHGEATAPVHMLLAGILLKMGGYALLRFNCELLPAAHAQFAPLLIVLGVVNIIYAALTSFAQRNLKRKIAYSSISHMGFVLIGVGSFSALGTSGAMLQMISHGLIGASLFFLVGATYDRTHTLQLDEMGGVGQKMRTMFALWTVCALASLALPGMSGFVSELMVFAGFATDEAYTLPFRVVICCLAAVGVILTPIYLLSMLREIFFGKEKQELVSHTNLVDAEPREVYIIGCLLVPIIGIGLYPRLMTDSYSRSIEALVGRDLGAMERITQPTAPLIRGQAPAVPAVLSAPSVPAS</sequence>
<organism>
    <name type="scientific">Parasynechococcus marenigrum (strain WH8102)</name>
    <dbReference type="NCBI Taxonomy" id="84588"/>
    <lineage>
        <taxon>Bacteria</taxon>
        <taxon>Bacillati</taxon>
        <taxon>Cyanobacteriota</taxon>
        <taxon>Cyanophyceae</taxon>
        <taxon>Synechococcales</taxon>
        <taxon>Prochlorococcaceae</taxon>
        <taxon>Parasynechococcus</taxon>
        <taxon>Parasynechococcus marenigrum</taxon>
    </lineage>
</organism>
<dbReference type="EC" id="7.1.1.-" evidence="1"/>
<dbReference type="EMBL" id="BX569695">
    <property type="protein sequence ID" value="CAE08778.1"/>
    <property type="molecule type" value="Genomic_DNA"/>
</dbReference>
<dbReference type="RefSeq" id="WP_011129116.1">
    <property type="nucleotide sequence ID" value="NC_005070.1"/>
</dbReference>
<dbReference type="SMR" id="Q7U413"/>
<dbReference type="STRING" id="84588.SYNW2263"/>
<dbReference type="KEGG" id="syw:SYNW2263"/>
<dbReference type="eggNOG" id="COG1008">
    <property type="taxonomic scope" value="Bacteria"/>
</dbReference>
<dbReference type="HOGENOM" id="CLU_007100_4_0_3"/>
<dbReference type="BioCyc" id="MetaCyc:TX72_RS11415-MONOMER"/>
<dbReference type="Proteomes" id="UP000001422">
    <property type="component" value="Chromosome"/>
</dbReference>
<dbReference type="GO" id="GO:0031676">
    <property type="term" value="C:plasma membrane-derived thylakoid membrane"/>
    <property type="evidence" value="ECO:0007669"/>
    <property type="project" value="UniProtKB-SubCell"/>
</dbReference>
<dbReference type="GO" id="GO:0008137">
    <property type="term" value="F:NADH dehydrogenase (ubiquinone) activity"/>
    <property type="evidence" value="ECO:0007669"/>
    <property type="project" value="InterPro"/>
</dbReference>
<dbReference type="GO" id="GO:0048039">
    <property type="term" value="F:ubiquinone binding"/>
    <property type="evidence" value="ECO:0007669"/>
    <property type="project" value="TreeGrafter"/>
</dbReference>
<dbReference type="GO" id="GO:0042773">
    <property type="term" value="P:ATP synthesis coupled electron transport"/>
    <property type="evidence" value="ECO:0007669"/>
    <property type="project" value="InterPro"/>
</dbReference>
<dbReference type="GO" id="GO:0015990">
    <property type="term" value="P:electron transport coupled proton transport"/>
    <property type="evidence" value="ECO:0007669"/>
    <property type="project" value="TreeGrafter"/>
</dbReference>
<dbReference type="HAMAP" id="MF_00491">
    <property type="entry name" value="NDH1_NuoM"/>
    <property type="match status" value="1"/>
</dbReference>
<dbReference type="InterPro" id="IPR022997">
    <property type="entry name" value="NADH_Q_OxRdtase_chain4"/>
</dbReference>
<dbReference type="InterPro" id="IPR010227">
    <property type="entry name" value="NADH_Q_OxRdtase_chainM/4"/>
</dbReference>
<dbReference type="InterPro" id="IPR003918">
    <property type="entry name" value="NADH_UbQ_OxRdtase"/>
</dbReference>
<dbReference type="InterPro" id="IPR001750">
    <property type="entry name" value="ND/Mrp_TM"/>
</dbReference>
<dbReference type="NCBIfam" id="TIGR01972">
    <property type="entry name" value="NDH_I_M"/>
    <property type="match status" value="1"/>
</dbReference>
<dbReference type="NCBIfam" id="NF002713">
    <property type="entry name" value="PRK02546.1"/>
    <property type="match status" value="1"/>
</dbReference>
<dbReference type="NCBIfam" id="NF009212">
    <property type="entry name" value="PRK12561.1"/>
    <property type="match status" value="1"/>
</dbReference>
<dbReference type="PANTHER" id="PTHR43507:SF21">
    <property type="entry name" value="NAD(P)H-QUINONE OXIDOREDUCTASE CHAIN 4, CHLOROPLASTIC"/>
    <property type="match status" value="1"/>
</dbReference>
<dbReference type="PANTHER" id="PTHR43507">
    <property type="entry name" value="NADH-UBIQUINONE OXIDOREDUCTASE CHAIN 4"/>
    <property type="match status" value="1"/>
</dbReference>
<dbReference type="Pfam" id="PF00361">
    <property type="entry name" value="Proton_antipo_M"/>
    <property type="match status" value="1"/>
</dbReference>
<dbReference type="PRINTS" id="PR01437">
    <property type="entry name" value="NUOXDRDTASE4"/>
</dbReference>
<keyword id="KW-0472">Membrane</keyword>
<keyword id="KW-0520">NAD</keyword>
<keyword id="KW-0521">NADP</keyword>
<keyword id="KW-0618">Plastoquinone</keyword>
<keyword id="KW-0874">Quinone</keyword>
<keyword id="KW-0793">Thylakoid</keyword>
<keyword id="KW-1278">Translocase</keyword>
<keyword id="KW-0812">Transmembrane</keyword>
<keyword id="KW-1133">Transmembrane helix</keyword>
<gene>
    <name evidence="1" type="primary">ndhD</name>
    <name type="ordered locus">SYNW2263</name>
</gene>
<comment type="function">
    <text evidence="1">NDH-1 shuttles electrons from NAD(P)H, via FMN and iron-sulfur (Fe-S) centers, to quinones in the respiratory chain. The immediate electron acceptor for the enzyme in this species is believed to be plastoquinone. Couples the redox reaction to proton translocation (for every two electrons transferred, four hydrogen ions are translocated across the cytoplasmic membrane), and thus conserves the redox energy in a proton gradient.</text>
</comment>
<comment type="catalytic activity">
    <reaction evidence="1">
        <text>a plastoquinone + NADH + (n+1) H(+)(in) = a plastoquinol + NAD(+) + n H(+)(out)</text>
        <dbReference type="Rhea" id="RHEA:42608"/>
        <dbReference type="Rhea" id="RHEA-COMP:9561"/>
        <dbReference type="Rhea" id="RHEA-COMP:9562"/>
        <dbReference type="ChEBI" id="CHEBI:15378"/>
        <dbReference type="ChEBI" id="CHEBI:17757"/>
        <dbReference type="ChEBI" id="CHEBI:57540"/>
        <dbReference type="ChEBI" id="CHEBI:57945"/>
        <dbReference type="ChEBI" id="CHEBI:62192"/>
    </reaction>
</comment>
<comment type="catalytic activity">
    <reaction evidence="1">
        <text>a plastoquinone + NADPH + (n+1) H(+)(in) = a plastoquinol + NADP(+) + n H(+)(out)</text>
        <dbReference type="Rhea" id="RHEA:42612"/>
        <dbReference type="Rhea" id="RHEA-COMP:9561"/>
        <dbReference type="Rhea" id="RHEA-COMP:9562"/>
        <dbReference type="ChEBI" id="CHEBI:15378"/>
        <dbReference type="ChEBI" id="CHEBI:17757"/>
        <dbReference type="ChEBI" id="CHEBI:57783"/>
        <dbReference type="ChEBI" id="CHEBI:58349"/>
        <dbReference type="ChEBI" id="CHEBI:62192"/>
    </reaction>
</comment>
<comment type="subcellular location">
    <subcellularLocation>
        <location evidence="1">Cellular thylakoid membrane</location>
        <topology evidence="1">Multi-pass membrane protein</topology>
    </subcellularLocation>
</comment>
<comment type="similarity">
    <text evidence="1">Belongs to the complex I subunit 4 family.</text>
</comment>
<name>NU4C_PARMW</name>
<protein>
    <recommendedName>
        <fullName evidence="1">NAD(P)H-quinone oxidoreductase chain 4</fullName>
        <ecNumber evidence="1">7.1.1.-</ecNumber>
    </recommendedName>
    <alternativeName>
        <fullName evidence="1">NAD(P)H dehydrogenase I, chain 4</fullName>
    </alternativeName>
    <alternativeName>
        <fullName evidence="1">NDH-1, chain 4</fullName>
    </alternativeName>
</protein>
<proteinExistence type="inferred from homology"/>